<gene>
    <name type="primary">AAT2</name>
    <name type="synonym">ASP5</name>
    <name type="ordered locus">YLR027C</name>
    <name type="ORF">L1746</name>
</gene>
<accession>P23542</accession>
<accession>D6VY29</accession>
<keyword id="KW-0002">3D-structure</keyword>
<keyword id="KW-0007">Acetylation</keyword>
<keyword id="KW-0032">Aminotransferase</keyword>
<keyword id="KW-0963">Cytoplasm</keyword>
<keyword id="KW-0903">Direct protein sequencing</keyword>
<keyword id="KW-0576">Peroxisome</keyword>
<keyword id="KW-0597">Phosphoprotein</keyword>
<keyword id="KW-0663">Pyridoxal phosphate</keyword>
<keyword id="KW-1185">Reference proteome</keyword>
<keyword id="KW-0808">Transferase</keyword>
<reference key="1">
    <citation type="journal article" date="1997" name="Nature">
        <title>The nucleotide sequence of Saccharomyces cerevisiae chromosome XII.</title>
        <authorList>
            <person name="Johnston M."/>
            <person name="Hillier L.W."/>
            <person name="Riles L."/>
            <person name="Albermann K."/>
            <person name="Andre B."/>
            <person name="Ansorge W."/>
            <person name="Benes V."/>
            <person name="Brueckner M."/>
            <person name="Delius H."/>
            <person name="Dubois E."/>
            <person name="Duesterhoeft A."/>
            <person name="Entian K.-D."/>
            <person name="Floeth M."/>
            <person name="Goffeau A."/>
            <person name="Hebling U."/>
            <person name="Heumann K."/>
            <person name="Heuss-Neitzel D."/>
            <person name="Hilbert H."/>
            <person name="Hilger F."/>
            <person name="Kleine K."/>
            <person name="Koetter P."/>
            <person name="Louis E.J."/>
            <person name="Messenguy F."/>
            <person name="Mewes H.-W."/>
            <person name="Miosga T."/>
            <person name="Moestl D."/>
            <person name="Mueller-Auer S."/>
            <person name="Nentwich U."/>
            <person name="Obermaier B."/>
            <person name="Piravandi E."/>
            <person name="Pohl T.M."/>
            <person name="Portetelle D."/>
            <person name="Purnelle B."/>
            <person name="Rechmann S."/>
            <person name="Rieger M."/>
            <person name="Rinke M."/>
            <person name="Rose M."/>
            <person name="Scharfe M."/>
            <person name="Scherens B."/>
            <person name="Scholler P."/>
            <person name="Schwager C."/>
            <person name="Schwarz S."/>
            <person name="Underwood A.P."/>
            <person name="Urrestarazu L.A."/>
            <person name="Vandenbol M."/>
            <person name="Verhasselt P."/>
            <person name="Vierendeels F."/>
            <person name="Voet M."/>
            <person name="Volckaert G."/>
            <person name="Voss H."/>
            <person name="Wambutt R."/>
            <person name="Wedler E."/>
            <person name="Wedler H."/>
            <person name="Zimmermann F.K."/>
            <person name="Zollner A."/>
            <person name="Hani J."/>
            <person name="Hoheisel J.D."/>
        </authorList>
    </citation>
    <scope>NUCLEOTIDE SEQUENCE [LARGE SCALE GENOMIC DNA]</scope>
    <source>
        <strain>ATCC 204508 / S288c</strain>
    </source>
</reference>
<reference key="2">
    <citation type="journal article" date="2014" name="G3 (Bethesda)">
        <title>The reference genome sequence of Saccharomyces cerevisiae: Then and now.</title>
        <authorList>
            <person name="Engel S.R."/>
            <person name="Dietrich F.S."/>
            <person name="Fisk D.G."/>
            <person name="Binkley G."/>
            <person name="Balakrishnan R."/>
            <person name="Costanzo M.C."/>
            <person name="Dwight S.S."/>
            <person name="Hitz B.C."/>
            <person name="Karra K."/>
            <person name="Nash R.S."/>
            <person name="Weng S."/>
            <person name="Wong E.D."/>
            <person name="Lloyd P."/>
            <person name="Skrzypek M.S."/>
            <person name="Miyasato S.R."/>
            <person name="Simison M."/>
            <person name="Cherry J.M."/>
        </authorList>
    </citation>
    <scope>GENOME REANNOTATION</scope>
    <source>
        <strain>ATCC 204508 / S288c</strain>
    </source>
</reference>
<reference key="3">
    <citation type="journal article" date="1990" name="Biochem. Soc. Trans.">
        <title>Amino acid sequences of aspartate aminotransferases: the cytosolic isoenzymes from yeast and from human liver.</title>
        <authorList>
            <person name="Cronin V.B."/>
            <person name="Doyle J.M."/>
            <person name="Doonan S."/>
        </authorList>
    </citation>
    <scope>PROTEIN SEQUENCE OF 2-418</scope>
</reference>
<reference key="4">
    <citation type="journal article" date="1991" name="Biochem. J.">
        <title>The amino acid sequence of the aspartate aminotransferase from baker's yeast (Saccharomyces cerevisiae).</title>
        <authorList>
            <person name="Cronin V.B."/>
            <person name="Maras B."/>
            <person name="Barra D."/>
            <person name="Doonan S."/>
        </authorList>
    </citation>
    <scope>PROTEIN SEQUENCE OF 2-418</scope>
    <scope>ACETYLATION AT SER-2</scope>
    <scope>ENZYME ACTIVITY</scope>
</reference>
<reference key="5">
    <citation type="journal article" date="1982" name="J. Biochem.">
        <title>Aspartate: 2-oxoglutarate aminotransferase from bakers' yeast: crystallization and characterization.</title>
        <authorList>
            <person name="Yagi T."/>
            <person name="Kagamiyama H."/>
            <person name="Nozaki M."/>
        </authorList>
    </citation>
    <scope>CRYSTALLIZATION</scope>
    <scope>CATALYTIC ACTIVITY</scope>
    <scope>COFACTOR</scope>
    <scope>BIOPHYSICOCHEMICAL PROPERTIES</scope>
    <scope>SUBUNIT</scope>
</reference>
<reference key="6">
    <citation type="journal article" date="1997" name="Eur. J. Biochem.">
        <title>Cytosolic aspartate aminotransferase encoded by the AAT2 gene is targeted to the peroxisomes in oleate-grown Saccharomyces cerevisiae.</title>
        <authorList>
            <person name="Verleur N."/>
            <person name="Elgersma Y."/>
            <person name="Van Roermund C.W."/>
            <person name="Tabak H.F."/>
            <person name="Wanders R.J."/>
        </authorList>
    </citation>
    <scope>ENZYME ACTIVITY</scope>
    <scope>SUBCELLULAR LOCATION</scope>
</reference>
<reference key="7">
    <citation type="journal article" date="2003" name="Nature">
        <title>Global analysis of protein expression in yeast.</title>
        <authorList>
            <person name="Ghaemmaghami S."/>
            <person name="Huh W.-K."/>
            <person name="Bower K."/>
            <person name="Howson R.W."/>
            <person name="Belle A."/>
            <person name="Dephoure N."/>
            <person name="O'Shea E.K."/>
            <person name="Weissman J.S."/>
        </authorList>
    </citation>
    <scope>LEVEL OF PROTEIN EXPRESSION [LARGE SCALE ANALYSIS]</scope>
</reference>
<reference key="8">
    <citation type="journal article" date="2007" name="Proc. Natl. Acad. Sci. U.S.A.">
        <title>Analysis of phosphorylation sites on proteins from Saccharomyces cerevisiae by electron transfer dissociation (ETD) mass spectrometry.</title>
        <authorList>
            <person name="Chi A."/>
            <person name="Huttenhower C."/>
            <person name="Geer L.Y."/>
            <person name="Coon J.J."/>
            <person name="Syka J.E.P."/>
            <person name="Bai D.L."/>
            <person name="Shabanowitz J."/>
            <person name="Burke D.J."/>
            <person name="Troyanskaya O.G."/>
            <person name="Hunt D.F."/>
        </authorList>
    </citation>
    <scope>PHOSPHORYLATION [LARGE SCALE ANALYSIS] AT SER-389</scope>
    <scope>IDENTIFICATION BY MASS SPECTROMETRY [LARGE SCALE ANALYSIS]</scope>
</reference>
<reference key="9">
    <citation type="journal article" date="2012" name="Proc. Natl. Acad. Sci. U.S.A.">
        <title>N-terminal acetylome analyses and functional insights of the N-terminal acetyltransferase NatB.</title>
        <authorList>
            <person name="Van Damme P."/>
            <person name="Lasa M."/>
            <person name="Polevoda B."/>
            <person name="Gazquez C."/>
            <person name="Elosegui-Artola A."/>
            <person name="Kim D.S."/>
            <person name="De Juan-Pardo E."/>
            <person name="Demeyer K."/>
            <person name="Hole K."/>
            <person name="Larrea E."/>
            <person name="Timmerman E."/>
            <person name="Prieto J."/>
            <person name="Arnesen T."/>
            <person name="Sherman F."/>
            <person name="Gevaert K."/>
            <person name="Aldabe R."/>
        </authorList>
    </citation>
    <scope>ACETYLATION [LARGE SCALE ANALYSIS] AT SER-2</scope>
    <scope>CLEAVAGE OF INITIATOR METHIONINE [LARGE SCALE ANALYSIS]</scope>
    <scope>IDENTIFICATION BY MASS SPECTROMETRY [LARGE SCALE ANALYSIS]</scope>
</reference>
<reference key="10">
    <citation type="journal article" date="1998" name="Protein Sci.">
        <title>Crystal structure of Saccharomyces cerevisiae cytosolic aspartate aminotransferase.</title>
        <authorList>
            <person name="Jeffery C.J."/>
            <person name="Barry T."/>
            <person name="Doonan S."/>
            <person name="Petsko G.A."/>
            <person name="Ringe D."/>
        </authorList>
    </citation>
    <scope>X-RAY CRYSTALLOGRAPHY (2.05 ANGSTROMS) IN COMPLEX WITH PYRODOXAL PHOSPHATE AND MALEIC ACID</scope>
    <scope>COFACTOR</scope>
    <scope>PYRIDOXAL PHOSPHATE AT LYS-255</scope>
    <scope>SUBUNIT</scope>
</reference>
<dbReference type="EC" id="2.6.1.1"/>
<dbReference type="EMBL" id="Z73199">
    <property type="protein sequence ID" value="CAA97550.1"/>
    <property type="status" value="ALT_INIT"/>
    <property type="molecule type" value="Genomic_DNA"/>
</dbReference>
<dbReference type="EMBL" id="BK006945">
    <property type="protein sequence ID" value="DAA09345.1"/>
    <property type="molecule type" value="Genomic_DNA"/>
</dbReference>
<dbReference type="PIR" id="S64854">
    <property type="entry name" value="S64854"/>
</dbReference>
<dbReference type="RefSeq" id="NP_013127.2">
    <property type="nucleotide sequence ID" value="NM_001181914.1"/>
</dbReference>
<dbReference type="PDB" id="1YAA">
    <property type="method" value="X-ray"/>
    <property type="resolution" value="2.05 A"/>
    <property type="chains" value="A/B/C/D=2-412"/>
</dbReference>
<dbReference type="PDBsum" id="1YAA"/>
<dbReference type="SMR" id="P23542"/>
<dbReference type="BioGRID" id="31301">
    <property type="interactions" value="223"/>
</dbReference>
<dbReference type="DIP" id="DIP-2897N"/>
<dbReference type="FunCoup" id="P23542">
    <property type="interactions" value="1079"/>
</dbReference>
<dbReference type="IntAct" id="P23542">
    <property type="interactions" value="25"/>
</dbReference>
<dbReference type="MINT" id="P23542"/>
<dbReference type="STRING" id="4932.YLR027C"/>
<dbReference type="iPTMnet" id="P23542"/>
<dbReference type="PaxDb" id="4932-YLR027C"/>
<dbReference type="PeptideAtlas" id="P23542"/>
<dbReference type="EnsemblFungi" id="YLR027C_mRNA">
    <property type="protein sequence ID" value="YLR027C"/>
    <property type="gene ID" value="YLR027C"/>
</dbReference>
<dbReference type="GeneID" id="850714"/>
<dbReference type="KEGG" id="sce:YLR027C"/>
<dbReference type="AGR" id="SGD:S000004017"/>
<dbReference type="SGD" id="S000004017">
    <property type="gene designation" value="AAT2"/>
</dbReference>
<dbReference type="VEuPathDB" id="FungiDB:YLR027C"/>
<dbReference type="eggNOG" id="KOG1412">
    <property type="taxonomic scope" value="Eukaryota"/>
</dbReference>
<dbReference type="GeneTree" id="ENSGT00950000183082"/>
<dbReference type="HOGENOM" id="CLU_032440_1_2_1"/>
<dbReference type="InParanoid" id="P23542"/>
<dbReference type="OMA" id="GTWTHIT"/>
<dbReference type="OrthoDB" id="6752799at2759"/>
<dbReference type="BioCyc" id="MetaCyc:YLR027C-MONOMER"/>
<dbReference type="BioCyc" id="YEAST:YLR027C-MONOMER"/>
<dbReference type="Reactome" id="R-SCE-8963693">
    <property type="pathway name" value="Aspartate and asparagine metabolism"/>
</dbReference>
<dbReference type="Reactome" id="R-SCE-9856872">
    <property type="pathway name" value="Malate-aspartate shuttle"/>
</dbReference>
<dbReference type="BioGRID-ORCS" id="850714">
    <property type="hits" value="3 hits in 10 CRISPR screens"/>
</dbReference>
<dbReference type="EvolutionaryTrace" id="P23542"/>
<dbReference type="PRO" id="PR:P23542"/>
<dbReference type="Proteomes" id="UP000002311">
    <property type="component" value="Chromosome XII"/>
</dbReference>
<dbReference type="RNAct" id="P23542">
    <property type="molecule type" value="protein"/>
</dbReference>
<dbReference type="GO" id="GO:0005829">
    <property type="term" value="C:cytosol"/>
    <property type="evidence" value="ECO:0000314"/>
    <property type="project" value="SGD"/>
</dbReference>
<dbReference type="GO" id="GO:0005777">
    <property type="term" value="C:peroxisome"/>
    <property type="evidence" value="ECO:0000314"/>
    <property type="project" value="SGD"/>
</dbReference>
<dbReference type="GO" id="GO:0004069">
    <property type="term" value="F:L-aspartate:2-oxoglutarate aminotransferase activity"/>
    <property type="evidence" value="ECO:0000314"/>
    <property type="project" value="SGD"/>
</dbReference>
<dbReference type="GO" id="GO:0030170">
    <property type="term" value="F:pyridoxal phosphate binding"/>
    <property type="evidence" value="ECO:0007669"/>
    <property type="project" value="InterPro"/>
</dbReference>
<dbReference type="GO" id="GO:0043023">
    <property type="term" value="F:ribosomal large subunit binding"/>
    <property type="evidence" value="ECO:0000314"/>
    <property type="project" value="SGD"/>
</dbReference>
<dbReference type="GO" id="GO:0006103">
    <property type="term" value="P:2-oxoglutarate metabolic process"/>
    <property type="evidence" value="ECO:0000250"/>
    <property type="project" value="UniProtKB"/>
</dbReference>
<dbReference type="GO" id="GO:0006532">
    <property type="term" value="P:aspartate biosynthetic process"/>
    <property type="evidence" value="ECO:0000315"/>
    <property type="project" value="SGD"/>
</dbReference>
<dbReference type="GO" id="GO:0006531">
    <property type="term" value="P:aspartate metabolic process"/>
    <property type="evidence" value="ECO:0000250"/>
    <property type="project" value="UniProtKB"/>
</dbReference>
<dbReference type="GO" id="GO:0006536">
    <property type="term" value="P:glutamate metabolic process"/>
    <property type="evidence" value="ECO:0000250"/>
    <property type="project" value="UniProtKB"/>
</dbReference>
<dbReference type="GO" id="GO:0032938">
    <property type="term" value="P:negative regulation of translation in response to oxidative stress"/>
    <property type="evidence" value="ECO:0000315"/>
    <property type="project" value="SGD"/>
</dbReference>
<dbReference type="CDD" id="cd00609">
    <property type="entry name" value="AAT_like"/>
    <property type="match status" value="1"/>
</dbReference>
<dbReference type="FunFam" id="3.40.640.10:FF:000064">
    <property type="entry name" value="Aspartate aminotransferase"/>
    <property type="match status" value="1"/>
</dbReference>
<dbReference type="FunFam" id="3.90.1150.10:FF:000001">
    <property type="entry name" value="Aspartate aminotransferase"/>
    <property type="match status" value="1"/>
</dbReference>
<dbReference type="Gene3D" id="3.90.1150.10">
    <property type="entry name" value="Aspartate Aminotransferase, domain 1"/>
    <property type="match status" value="1"/>
</dbReference>
<dbReference type="Gene3D" id="3.40.640.10">
    <property type="entry name" value="Type I PLP-dependent aspartate aminotransferase-like (Major domain)"/>
    <property type="match status" value="1"/>
</dbReference>
<dbReference type="InterPro" id="IPR004839">
    <property type="entry name" value="Aminotransferase_I/II_large"/>
</dbReference>
<dbReference type="InterPro" id="IPR000796">
    <property type="entry name" value="Asp_trans"/>
</dbReference>
<dbReference type="InterPro" id="IPR004838">
    <property type="entry name" value="NHTrfase_class1_PyrdxlP-BS"/>
</dbReference>
<dbReference type="InterPro" id="IPR015424">
    <property type="entry name" value="PyrdxlP-dep_Trfase"/>
</dbReference>
<dbReference type="InterPro" id="IPR015421">
    <property type="entry name" value="PyrdxlP-dep_Trfase_major"/>
</dbReference>
<dbReference type="InterPro" id="IPR015422">
    <property type="entry name" value="PyrdxlP-dep_Trfase_small"/>
</dbReference>
<dbReference type="NCBIfam" id="NF006719">
    <property type="entry name" value="PRK09257.1"/>
    <property type="match status" value="1"/>
</dbReference>
<dbReference type="PANTHER" id="PTHR11879">
    <property type="entry name" value="ASPARTATE AMINOTRANSFERASE"/>
    <property type="match status" value="1"/>
</dbReference>
<dbReference type="PANTHER" id="PTHR11879:SF55">
    <property type="entry name" value="GLUTAMATE OXALOACETATE TRANSAMINASE 1, ISOFORM B"/>
    <property type="match status" value="1"/>
</dbReference>
<dbReference type="Pfam" id="PF00155">
    <property type="entry name" value="Aminotran_1_2"/>
    <property type="match status" value="1"/>
</dbReference>
<dbReference type="PRINTS" id="PR00799">
    <property type="entry name" value="TRANSAMINASE"/>
</dbReference>
<dbReference type="SUPFAM" id="SSF53383">
    <property type="entry name" value="PLP-dependent transferases"/>
    <property type="match status" value="1"/>
</dbReference>
<dbReference type="PROSITE" id="PS00105">
    <property type="entry name" value="AA_TRANSFER_CLASS_1"/>
    <property type="match status" value="1"/>
</dbReference>
<name>AATC_YEAST</name>
<organism>
    <name type="scientific">Saccharomyces cerevisiae (strain ATCC 204508 / S288c)</name>
    <name type="common">Baker's yeast</name>
    <dbReference type="NCBI Taxonomy" id="559292"/>
    <lineage>
        <taxon>Eukaryota</taxon>
        <taxon>Fungi</taxon>
        <taxon>Dikarya</taxon>
        <taxon>Ascomycota</taxon>
        <taxon>Saccharomycotina</taxon>
        <taxon>Saccharomycetes</taxon>
        <taxon>Saccharomycetales</taxon>
        <taxon>Saccharomycetaceae</taxon>
        <taxon>Saccharomyces</taxon>
    </lineage>
</organism>
<proteinExistence type="evidence at protein level"/>
<feature type="initiator methionine" description="Removed" evidence="2 3 9">
    <location>
        <position position="1"/>
    </location>
</feature>
<feature type="chain" id="PRO_0000123875" description="Aspartate aminotransferase, cytoplasmic">
    <location>
        <begin position="2"/>
        <end position="418"/>
    </location>
</feature>
<feature type="binding site" evidence="6">
    <location>
        <position position="38"/>
    </location>
    <ligand>
        <name>L-aspartate</name>
        <dbReference type="ChEBI" id="CHEBI:29991"/>
    </ligand>
</feature>
<feature type="binding site" evidence="6">
    <location>
        <position position="135"/>
    </location>
    <ligand>
        <name>L-aspartate</name>
        <dbReference type="ChEBI" id="CHEBI:29991"/>
    </ligand>
</feature>
<feature type="binding site" evidence="6">
    <location>
        <position position="188"/>
    </location>
    <ligand>
        <name>L-aspartate</name>
        <dbReference type="ChEBI" id="CHEBI:29991"/>
    </ligand>
</feature>
<feature type="binding site" evidence="6">
    <location>
        <position position="387"/>
    </location>
    <ligand>
        <name>L-aspartate</name>
        <dbReference type="ChEBI" id="CHEBI:29991"/>
    </ligand>
</feature>
<feature type="modified residue" description="N-acetylserine" evidence="2 9">
    <location>
        <position position="2"/>
    </location>
</feature>
<feature type="modified residue" description="N6-(pyridoxal phosphate)lysine" evidence="6">
    <location>
        <position position="255"/>
    </location>
</feature>
<feature type="modified residue" description="Phosphoserine" evidence="8">
    <location>
        <position position="389"/>
    </location>
</feature>
<feature type="sequence conflict" description="In Ref. 3; AA sequence and 4; AA sequence." evidence="7" ref="3 4">
    <original>F</original>
    <variation>L</variation>
    <location>
        <position position="95"/>
    </location>
</feature>
<feature type="sequence conflict" description="In Ref. 3; AA sequence and 4; AA sequence." evidence="7" ref="3 4">
    <original>TI</original>
    <variation>AT</variation>
    <location>
        <begin position="413"/>
        <end position="414"/>
    </location>
</feature>
<feature type="turn" evidence="10">
    <location>
        <begin position="3"/>
        <end position="8"/>
    </location>
</feature>
<feature type="helix" evidence="10">
    <location>
        <begin position="18"/>
        <end position="25"/>
    </location>
</feature>
<feature type="helix" evidence="10">
    <location>
        <begin position="51"/>
        <end position="61"/>
    </location>
</feature>
<feature type="helix" evidence="10">
    <location>
        <begin position="77"/>
        <end position="88"/>
    </location>
</feature>
<feature type="helix" evidence="10">
    <location>
        <begin position="93"/>
        <end position="96"/>
    </location>
</feature>
<feature type="strand" evidence="10">
    <location>
        <begin position="100"/>
        <end position="106"/>
    </location>
</feature>
<feature type="helix" evidence="10">
    <location>
        <begin position="107"/>
        <end position="122"/>
    </location>
</feature>
<feature type="strand" evidence="10">
    <location>
        <begin position="128"/>
        <end position="133"/>
    </location>
</feature>
<feature type="helix" evidence="10">
    <location>
        <begin position="138"/>
        <end position="143"/>
    </location>
</feature>
<feature type="turn" evidence="10">
    <location>
        <begin position="144"/>
        <end position="146"/>
    </location>
</feature>
<feature type="strand" evidence="10">
    <location>
        <begin position="149"/>
        <end position="153"/>
    </location>
</feature>
<feature type="turn" evidence="10">
    <location>
        <begin position="157"/>
        <end position="160"/>
    </location>
</feature>
<feature type="helix" evidence="10">
    <location>
        <begin position="164"/>
        <end position="173"/>
    </location>
</feature>
<feature type="strand" evidence="10">
    <location>
        <begin position="179"/>
        <end position="183"/>
    </location>
</feature>
<feature type="turn" evidence="10">
    <location>
        <begin position="188"/>
        <end position="190"/>
    </location>
</feature>
<feature type="helix" evidence="10">
    <location>
        <begin position="196"/>
        <end position="208"/>
    </location>
</feature>
<feature type="strand" evidence="10">
    <location>
        <begin position="212"/>
        <end position="218"/>
    </location>
</feature>
<feature type="turn" evidence="10">
    <location>
        <begin position="220"/>
        <end position="222"/>
    </location>
</feature>
<feature type="strand" evidence="10">
    <location>
        <begin position="223"/>
        <end position="225"/>
    </location>
</feature>
<feature type="helix" evidence="10">
    <location>
        <begin position="227"/>
        <end position="230"/>
    </location>
</feature>
<feature type="helix" evidence="10">
    <location>
        <begin position="232"/>
        <end position="240"/>
    </location>
</feature>
<feature type="turn" evidence="10">
    <location>
        <begin position="241"/>
        <end position="244"/>
    </location>
</feature>
<feature type="strand" evidence="10">
    <location>
        <begin position="247"/>
        <end position="252"/>
    </location>
</feature>
<feature type="turn" evidence="10">
    <location>
        <begin position="254"/>
        <end position="256"/>
    </location>
</feature>
<feature type="helix" evidence="10">
    <location>
        <begin position="260"/>
        <end position="262"/>
    </location>
</feature>
<feature type="strand" evidence="10">
    <location>
        <begin position="264"/>
        <end position="270"/>
    </location>
</feature>
<feature type="helix" evidence="10">
    <location>
        <begin position="277"/>
        <end position="293"/>
    </location>
</feature>
<feature type="turn" evidence="10">
    <location>
        <begin position="294"/>
        <end position="296"/>
    </location>
</feature>
<feature type="helix" evidence="10">
    <location>
        <begin position="301"/>
        <end position="312"/>
    </location>
</feature>
<feature type="helix" evidence="10">
    <location>
        <begin position="314"/>
        <end position="345"/>
    </location>
</feature>
<feature type="helix" evidence="10">
    <location>
        <begin position="353"/>
        <end position="356"/>
    </location>
</feature>
<feature type="strand" evidence="10">
    <location>
        <begin position="359"/>
        <end position="363"/>
    </location>
</feature>
<feature type="helix" evidence="10">
    <location>
        <begin position="368"/>
        <end position="378"/>
    </location>
</feature>
<feature type="strand" evidence="10">
    <location>
        <begin position="386"/>
        <end position="389"/>
    </location>
</feature>
<feature type="helix" evidence="10">
    <location>
        <begin position="390"/>
        <end position="392"/>
    </location>
</feature>
<feature type="turn" evidence="10">
    <location>
        <begin position="395"/>
        <end position="397"/>
    </location>
</feature>
<feature type="helix" evidence="10">
    <location>
        <begin position="398"/>
        <end position="411"/>
    </location>
</feature>
<comment type="function">
    <text>Plays a key role in amino acid metabolism.</text>
</comment>
<comment type="catalytic activity">
    <reaction evidence="2 4 5">
        <text>L-aspartate + 2-oxoglutarate = oxaloacetate + L-glutamate</text>
        <dbReference type="Rhea" id="RHEA:21824"/>
        <dbReference type="ChEBI" id="CHEBI:16452"/>
        <dbReference type="ChEBI" id="CHEBI:16810"/>
        <dbReference type="ChEBI" id="CHEBI:29985"/>
        <dbReference type="ChEBI" id="CHEBI:29991"/>
        <dbReference type="EC" id="2.6.1.1"/>
    </reaction>
</comment>
<comment type="cofactor">
    <cofactor evidence="4 6">
        <name>pyridoxal 5'-phosphate</name>
        <dbReference type="ChEBI" id="CHEBI:597326"/>
    </cofactor>
</comment>
<comment type="biophysicochemical properties">
    <kinetics>
        <KM evidence="4">0.11 mM for L-aspartate</KM>
        <KM evidence="4">20 mM for L-glutamate</KM>
        <KM evidence="4">0.006 mM for oxaloacetate</KM>
        <KM evidence="4">0.16 mM for 2-oxoglutarate</KM>
    </kinetics>
    <phDependence>
        <text evidence="4">Optimum pH is 8-9.</text>
    </phDependence>
</comment>
<comment type="subunit">
    <text evidence="4 6">Homodimer.</text>
</comment>
<comment type="subcellular location">
    <subcellularLocation>
        <location evidence="5">Cytoplasm</location>
    </subcellularLocation>
    <subcellularLocation>
        <location evidence="5">Peroxisome</location>
    </subcellularLocation>
    <text>Targeted to peroxisomes in cells grown in oleate.</text>
</comment>
<comment type="miscellaneous">
    <text>In eukaryotes there are cytoplasmic, mitochondrial and chloroplastic isozymes.</text>
</comment>
<comment type="miscellaneous">
    <text evidence="1">Present with 7700 molecules/cell in log phase SD medium.</text>
</comment>
<comment type="similarity">
    <text evidence="7">Belongs to the class-I pyridoxal-phosphate-dependent aminotransferase family.</text>
</comment>
<comment type="sequence caution" evidence="7">
    <conflict type="erroneous initiation">
        <sequence resource="EMBL-CDS" id="CAA97550"/>
    </conflict>
    <text>Extended N-terminus.</text>
</comment>
<sequence length="418" mass="46058">MSATLFNNIELLPPDALFGIKQRYGQDQRATKVDLGIGAYRDDNGKPWVLPSVKAAEKLIHNDSSYNHEYLGITGLPSLTSNAAKIIFGTQSDAFQEDRVISVQSLSGTGALHISAKFFSKFFPDKLVYLSKPTWANHMAIFENQGLKTATYPYWANETKSLDLNGFLNAIQKAPEGSIFVLHSCAHNPTGLDPTSEQWVQIVDAIASKNHIALFDTAYQGFATGDLDKDAYAVRLGVEKLSTVSPVFVCQSFAKNAGMYGERVGCFHLALTKQAQNKTIKPAVTSQLAKIIRSEVSNPPAYGAKIVAKLLETPELTEQWHKDMVTMSSRITKMRHALRDHLVKLGTPGNWDHIVNQCGMFSFTGLTPQMVKRLEETHAVYLVASGRASIAGLNQGNVEYVAKAIDEVVRFYTIEAKL</sequence>
<protein>
    <recommendedName>
        <fullName>Aspartate aminotransferase, cytoplasmic</fullName>
        <ecNumber>2.6.1.1</ecNumber>
    </recommendedName>
    <alternativeName>
        <fullName>Transaminase A</fullName>
    </alternativeName>
</protein>
<evidence type="ECO:0000269" key="1">
    <source>
    </source>
</evidence>
<evidence type="ECO:0000269" key="2">
    <source>
    </source>
</evidence>
<evidence type="ECO:0000269" key="3">
    <source>
    </source>
</evidence>
<evidence type="ECO:0000269" key="4">
    <source>
    </source>
</evidence>
<evidence type="ECO:0000269" key="5">
    <source>
    </source>
</evidence>
<evidence type="ECO:0000269" key="6">
    <source>
    </source>
</evidence>
<evidence type="ECO:0000305" key="7"/>
<evidence type="ECO:0007744" key="8">
    <source>
    </source>
</evidence>
<evidence type="ECO:0007744" key="9">
    <source>
    </source>
</evidence>
<evidence type="ECO:0007829" key="10">
    <source>
        <dbReference type="PDB" id="1YAA"/>
    </source>
</evidence>